<protein>
    <recommendedName>
        <fullName evidence="1">Uracil-DNA glycosylase</fullName>
        <shortName evidence="1">UDG</shortName>
        <ecNumber evidence="1">3.2.2.27</ecNumber>
    </recommendedName>
</protein>
<name>UNG_ECOBW</name>
<organism>
    <name type="scientific">Escherichia coli (strain K12 / MC4100 / BW2952)</name>
    <dbReference type="NCBI Taxonomy" id="595496"/>
    <lineage>
        <taxon>Bacteria</taxon>
        <taxon>Pseudomonadati</taxon>
        <taxon>Pseudomonadota</taxon>
        <taxon>Gammaproteobacteria</taxon>
        <taxon>Enterobacterales</taxon>
        <taxon>Enterobacteriaceae</taxon>
        <taxon>Escherichia</taxon>
    </lineage>
</organism>
<reference key="1">
    <citation type="journal article" date="2009" name="J. Bacteriol.">
        <title>Genomic sequencing reveals regulatory mutations and recombinational events in the widely used MC4100 lineage of Escherichia coli K-12.</title>
        <authorList>
            <person name="Ferenci T."/>
            <person name="Zhou Z."/>
            <person name="Betteridge T."/>
            <person name="Ren Y."/>
            <person name="Liu Y."/>
            <person name="Feng L."/>
            <person name="Reeves P.R."/>
            <person name="Wang L."/>
        </authorList>
    </citation>
    <scope>NUCLEOTIDE SEQUENCE [LARGE SCALE GENOMIC DNA]</scope>
    <source>
        <strain>K12 / MC4100 / BW2952</strain>
    </source>
</reference>
<gene>
    <name evidence="1" type="primary">ung</name>
    <name type="ordered locus">BWG_2344</name>
</gene>
<accession>C4ZYK3</accession>
<comment type="function">
    <text evidence="1">Excises uracil residues from the DNA which can arise as a result of misincorporation of dUMP residues by DNA polymerase or due to deamination of cytosine.</text>
</comment>
<comment type="catalytic activity">
    <reaction evidence="1">
        <text>Hydrolyzes single-stranded DNA or mismatched double-stranded DNA and polynucleotides, releasing free uracil.</text>
        <dbReference type="EC" id="3.2.2.27"/>
    </reaction>
</comment>
<comment type="subcellular location">
    <subcellularLocation>
        <location evidence="1">Cytoplasm</location>
    </subcellularLocation>
</comment>
<comment type="similarity">
    <text evidence="1">Belongs to the uracil-DNA glycosylase (UDG) superfamily. UNG family.</text>
</comment>
<sequence length="229" mass="25693">MANELTWHDVLAEEKQQPYFLNTLQTVASERQSGVTIYPPQKDVFNAFRFTELGDVKVVILGQDPYHGPGQAHGLAFSVRPGIAIPPSLLNMYKELENTIPGFTRPNHGYLESWARQGVLLLNTVLTVRAGQAHSHASLGWETFTDKVISLINQHREGVVFLLWGSHAQKKGAIIDKQRHHVLKAPHPSPLSAHRGFFGCNHFVLANQWLEQRGETPIDWMPVLPAESE</sequence>
<dbReference type="EC" id="3.2.2.27" evidence="1"/>
<dbReference type="EMBL" id="CP001396">
    <property type="protein sequence ID" value="ACR65765.1"/>
    <property type="molecule type" value="Genomic_DNA"/>
</dbReference>
<dbReference type="RefSeq" id="WP_001262716.1">
    <property type="nucleotide sequence ID" value="NC_012759.1"/>
</dbReference>
<dbReference type="SMR" id="C4ZYK3"/>
<dbReference type="GeneID" id="93774506"/>
<dbReference type="KEGG" id="ebw:BWG_2344"/>
<dbReference type="HOGENOM" id="CLU_032162_3_1_6"/>
<dbReference type="GO" id="GO:0005737">
    <property type="term" value="C:cytoplasm"/>
    <property type="evidence" value="ECO:0007669"/>
    <property type="project" value="UniProtKB-SubCell"/>
</dbReference>
<dbReference type="GO" id="GO:0004844">
    <property type="term" value="F:uracil DNA N-glycosylase activity"/>
    <property type="evidence" value="ECO:0007669"/>
    <property type="project" value="UniProtKB-UniRule"/>
</dbReference>
<dbReference type="GO" id="GO:0097510">
    <property type="term" value="P:base-excision repair, AP site formation via deaminated base removal"/>
    <property type="evidence" value="ECO:0007669"/>
    <property type="project" value="TreeGrafter"/>
</dbReference>
<dbReference type="CDD" id="cd10027">
    <property type="entry name" value="UDG-F1-like"/>
    <property type="match status" value="1"/>
</dbReference>
<dbReference type="FunFam" id="3.40.470.10:FF:000001">
    <property type="entry name" value="Uracil-DNA glycosylase"/>
    <property type="match status" value="1"/>
</dbReference>
<dbReference type="Gene3D" id="3.40.470.10">
    <property type="entry name" value="Uracil-DNA glycosylase-like domain"/>
    <property type="match status" value="1"/>
</dbReference>
<dbReference type="HAMAP" id="MF_00148">
    <property type="entry name" value="UDG"/>
    <property type="match status" value="1"/>
</dbReference>
<dbReference type="InterPro" id="IPR002043">
    <property type="entry name" value="UDG_fam1"/>
</dbReference>
<dbReference type="InterPro" id="IPR018085">
    <property type="entry name" value="Ura-DNA_Glyclase_AS"/>
</dbReference>
<dbReference type="InterPro" id="IPR005122">
    <property type="entry name" value="Uracil-DNA_glycosylase-like"/>
</dbReference>
<dbReference type="InterPro" id="IPR036895">
    <property type="entry name" value="Uracil-DNA_glycosylase-like_sf"/>
</dbReference>
<dbReference type="NCBIfam" id="NF003588">
    <property type="entry name" value="PRK05254.1-1"/>
    <property type="match status" value="1"/>
</dbReference>
<dbReference type="NCBIfam" id="NF003589">
    <property type="entry name" value="PRK05254.1-2"/>
    <property type="match status" value="1"/>
</dbReference>
<dbReference type="NCBIfam" id="NF003591">
    <property type="entry name" value="PRK05254.1-4"/>
    <property type="match status" value="1"/>
</dbReference>
<dbReference type="NCBIfam" id="NF003592">
    <property type="entry name" value="PRK05254.1-5"/>
    <property type="match status" value="1"/>
</dbReference>
<dbReference type="NCBIfam" id="TIGR00628">
    <property type="entry name" value="ung"/>
    <property type="match status" value="1"/>
</dbReference>
<dbReference type="PANTHER" id="PTHR11264">
    <property type="entry name" value="URACIL-DNA GLYCOSYLASE"/>
    <property type="match status" value="1"/>
</dbReference>
<dbReference type="PANTHER" id="PTHR11264:SF0">
    <property type="entry name" value="URACIL-DNA GLYCOSYLASE"/>
    <property type="match status" value="1"/>
</dbReference>
<dbReference type="Pfam" id="PF03167">
    <property type="entry name" value="UDG"/>
    <property type="match status" value="1"/>
</dbReference>
<dbReference type="SMART" id="SM00986">
    <property type="entry name" value="UDG"/>
    <property type="match status" value="1"/>
</dbReference>
<dbReference type="SMART" id="SM00987">
    <property type="entry name" value="UreE_C"/>
    <property type="match status" value="1"/>
</dbReference>
<dbReference type="SUPFAM" id="SSF52141">
    <property type="entry name" value="Uracil-DNA glycosylase-like"/>
    <property type="match status" value="1"/>
</dbReference>
<dbReference type="PROSITE" id="PS00130">
    <property type="entry name" value="U_DNA_GLYCOSYLASE"/>
    <property type="match status" value="1"/>
</dbReference>
<keyword id="KW-0963">Cytoplasm</keyword>
<keyword id="KW-0227">DNA damage</keyword>
<keyword id="KW-0234">DNA repair</keyword>
<keyword id="KW-0378">Hydrolase</keyword>
<evidence type="ECO:0000255" key="1">
    <source>
        <dbReference type="HAMAP-Rule" id="MF_00148"/>
    </source>
</evidence>
<proteinExistence type="inferred from homology"/>
<feature type="chain" id="PRO_1000203374" description="Uracil-DNA glycosylase">
    <location>
        <begin position="1"/>
        <end position="229"/>
    </location>
</feature>
<feature type="active site" description="Proton acceptor" evidence="1">
    <location>
        <position position="64"/>
    </location>
</feature>